<keyword id="KW-1015">Disulfide bond</keyword>
<keyword id="KW-0872">Ion channel impairing toxin</keyword>
<keyword id="KW-0960">Knottin</keyword>
<keyword id="KW-0964">Secreted</keyword>
<keyword id="KW-0732">Signal</keyword>
<keyword id="KW-0800">Toxin</keyword>
<accession>W4VS46</accession>
<name>ICK10_TRILK</name>
<comment type="function">
    <text evidence="3">Ion channel inhibitor.</text>
</comment>
<comment type="subcellular location">
    <subcellularLocation>
        <location evidence="1">Secreted</location>
    </subcellularLocation>
</comment>
<comment type="tissue specificity">
    <text>Expressed by the venom gland.</text>
</comment>
<comment type="domain">
    <text evidence="1">The presence of a 'disulfide through disulfide knot' structurally defines this protein as a knottin.</text>
</comment>
<comment type="similarity">
    <text>Belongs to the neurotoxin 25 family. ICK-8 subfamily.</text>
</comment>
<organism>
    <name type="scientific">Trittame loki</name>
    <name type="common">Brush-footed trapdoor spider</name>
    <dbReference type="NCBI Taxonomy" id="1295018"/>
    <lineage>
        <taxon>Eukaryota</taxon>
        <taxon>Metazoa</taxon>
        <taxon>Ecdysozoa</taxon>
        <taxon>Arthropoda</taxon>
        <taxon>Chelicerata</taxon>
        <taxon>Arachnida</taxon>
        <taxon>Araneae</taxon>
        <taxon>Mygalomorphae</taxon>
        <taxon>Barychelidae</taxon>
        <taxon>Trittame</taxon>
    </lineage>
</organism>
<dbReference type="EMBL" id="GAQE01000013">
    <property type="protein sequence ID" value="JAB84541.1"/>
    <property type="molecule type" value="Transcribed_RNA"/>
</dbReference>
<dbReference type="ArachnoServer" id="AS002002">
    <property type="toxin name" value="U1-barytoxin-Tl1b"/>
</dbReference>
<dbReference type="GO" id="GO:0005576">
    <property type="term" value="C:extracellular region"/>
    <property type="evidence" value="ECO:0007669"/>
    <property type="project" value="UniProtKB-SubCell"/>
</dbReference>
<dbReference type="GO" id="GO:0099106">
    <property type="term" value="F:ion channel regulator activity"/>
    <property type="evidence" value="ECO:0007669"/>
    <property type="project" value="UniProtKB-KW"/>
</dbReference>
<dbReference type="GO" id="GO:0090729">
    <property type="term" value="F:toxin activity"/>
    <property type="evidence" value="ECO:0007669"/>
    <property type="project" value="UniProtKB-KW"/>
</dbReference>
<reference key="1">
    <citation type="journal article" date="2013" name="Toxins">
        <title>A proteomics and transcriptomics investigation of the venom from the barychelid spider Trittame loki (brush-foot trapdoor).</title>
        <authorList>
            <person name="Undheim E.A."/>
            <person name="Sunagar K."/>
            <person name="Herzig V."/>
            <person name="Kely L."/>
            <person name="Low D.H."/>
            <person name="Jackson T.N."/>
            <person name="Jones A."/>
            <person name="Kurniawan N."/>
            <person name="King G.F."/>
            <person name="Ali S.A."/>
            <person name="Antunes A."/>
            <person name="Ruder T."/>
            <person name="Fry B.G."/>
        </authorList>
    </citation>
    <scope>NUCLEOTIDE SEQUENCE [MRNA]</scope>
    <source>
        <tissue>Venom gland</tissue>
    </source>
</reference>
<protein>
    <recommendedName>
        <fullName>Toxin ICK-10</fullName>
    </recommendedName>
</protein>
<sequence length="116" mass="12797">MMKLYSLVIIATLAAAAFAATKQEIAAAALSGMVHDFEQYAKRAEGEEEPKRYIRCSKQLGEKCDLNCECCGASAVCEDYNYICKEKVSDNPVLDWFGQGLNAMGNAISRYYCDAE</sequence>
<evidence type="ECO:0000250" key="1"/>
<evidence type="ECO:0000255" key="2"/>
<evidence type="ECO:0000305" key="3"/>
<proteinExistence type="evidence at transcript level"/>
<feature type="signal peptide" evidence="2">
    <location>
        <begin position="1"/>
        <end position="19"/>
    </location>
</feature>
<feature type="chain" id="PRO_0000429217" description="Toxin ICK-10">
    <location>
        <begin position="20"/>
        <end position="116"/>
    </location>
</feature>
<feature type="disulfide bond" evidence="1">
    <location>
        <begin position="56"/>
        <end position="71"/>
    </location>
</feature>
<feature type="disulfide bond" evidence="1">
    <location>
        <begin position="64"/>
        <end position="77"/>
    </location>
</feature>
<feature type="disulfide bond" evidence="1">
    <location>
        <begin position="68"/>
        <end position="113"/>
    </location>
</feature>
<feature type="disulfide bond" evidence="1">
    <location>
        <begin position="70"/>
        <end position="84"/>
    </location>
</feature>